<name>Y076_OSHVF</name>
<dbReference type="EMBL" id="AY509253">
    <property type="protein sequence ID" value="AAS00962.1"/>
    <property type="molecule type" value="Genomic_DNA"/>
</dbReference>
<dbReference type="RefSeq" id="YP_024615.1">
    <property type="nucleotide sequence ID" value="NC_005881.2"/>
</dbReference>
<dbReference type="KEGG" id="vg:2948259"/>
<dbReference type="Proteomes" id="UP000007021">
    <property type="component" value="Segment"/>
</dbReference>
<proteinExistence type="predicted"/>
<sequence>MFFISRSDTDQATTILYIKMEFKKWHDHECDKGVVVRNLIVGTKVYARKDDGKIPPRDLLSTIGRTKTFICGTCGMRIMDMEDEMSMYDMSMRINTVLKAYADVYKGEGMAMVQKFRDQGKYFMSYYIMTMNNQDVANKTKPSIVLSPNKQHFIPDPKWDQNVALTSKWWEDDKCDYDNQYSIMEHTSSVIESLIAYGGGTMEERMKSSKAATDRGTYIHENYGKMILANAVSVFPGYENFQTVLPGRIIWNNFSLIGCTPDGLTVPSESTFHEYLEKIWEHNPKDPVPDSLMRLARKGAPHIIHEIKSLQKACARVREDWVDSKFYTFQRVGGENEEFKRDVVNYIAKLFIAAGYMQKDEISRSKYAQIEGEKVEQYTCTDPEGKYYDTGKSKPSAFTRTCKIALTDAIDYKSINLISGQVVKQLADHPLYNEEIDEKTGKKKPSKKCTVKREGGFYPCRKVLNKVGKCKIIFYRRHPVTKEPIKSFDLDFDESPFRLTVNGDHFIQTMTQMATCTWLNKNMKHMYTSVLSFFDGTAAPAVQISWEQNMTLDLIDDYMYHTCKRVREVCPKTWAQVFRKAEFTGVPLCLRPDISVDIDSYIPPKVGMENIEEMDAKESEDMFNSMMKCFGMTEDTTADKPIKKRKRVTFEDDIIEVKKLTKIHRGRQATHEISDEED</sequence>
<reference key="1">
    <citation type="journal article" date="2005" name="J. Gen. Virol.">
        <title>A novel class of herpesvirus with bivalve hosts.</title>
        <authorList>
            <person name="Davison A.J."/>
            <person name="Trus B.L."/>
            <person name="Cheng N."/>
            <person name="Steven A.C."/>
            <person name="Watson M.S."/>
            <person name="Cunningham C."/>
            <person name="Le Deuff R.M."/>
            <person name="Renault T."/>
        </authorList>
    </citation>
    <scope>NUCLEOTIDE SEQUENCE [LARGE SCALE GENOMIC DNA]</scope>
</reference>
<feature type="chain" id="PRO_0000385097" description="Uncharacterized protein ORF76">
    <location>
        <begin position="1"/>
        <end position="678"/>
    </location>
</feature>
<organism>
    <name type="scientific">Ostreid herpesvirus 1 (isolate France)</name>
    <name type="common">OsHV-1</name>
    <name type="synonym">Pacific oyster herpesvirus</name>
    <dbReference type="NCBI Taxonomy" id="654903"/>
    <lineage>
        <taxon>Viruses</taxon>
        <taxon>Duplodnaviria</taxon>
        <taxon>Heunggongvirae</taxon>
        <taxon>Peploviricota</taxon>
        <taxon>Herviviricetes</taxon>
        <taxon>Herpesvirales</taxon>
        <taxon>Malacoherpesviridae</taxon>
        <taxon>Ostreavirus</taxon>
        <taxon>Ostreavirus ostreidmalaco1</taxon>
        <taxon>Ostreid herpesvirus 1</taxon>
    </lineage>
</organism>
<organismHost>
    <name type="scientific">Magallana gigas</name>
    <name type="common">Pacific oyster</name>
    <name type="synonym">Crassostrea gigas</name>
    <dbReference type="NCBI Taxonomy" id="29159"/>
</organismHost>
<organismHost>
    <name type="scientific">Pecten maximus</name>
    <name type="common">King scallop</name>
    <name type="synonym">Pilgrim's clam</name>
    <dbReference type="NCBI Taxonomy" id="6579"/>
</organismHost>
<gene>
    <name type="ORF">ORF76</name>
</gene>
<keyword id="KW-1185">Reference proteome</keyword>
<accession>Q6R7F3</accession>
<protein>
    <recommendedName>
        <fullName>Uncharacterized protein ORF76</fullName>
    </recommendedName>
</protein>